<feature type="chain" id="PRO_0000295240" description="Actin filament-associated protein 1-like 1">
    <location>
        <begin position="1"/>
        <end position="768"/>
    </location>
</feature>
<feature type="domain" description="PH 1" evidence="5">
    <location>
        <begin position="220"/>
        <end position="316"/>
    </location>
</feature>
<feature type="domain" description="PH 2" evidence="5">
    <location>
        <begin position="418"/>
        <end position="512"/>
    </location>
</feature>
<feature type="region of interest" description="Disordered" evidence="6">
    <location>
        <begin position="83"/>
        <end position="145"/>
    </location>
</feature>
<feature type="region of interest" description="Disordered" evidence="6">
    <location>
        <begin position="165"/>
        <end position="211"/>
    </location>
</feature>
<feature type="region of interest" description="Disordered" evidence="6">
    <location>
        <begin position="340"/>
        <end position="382"/>
    </location>
</feature>
<feature type="region of interest" description="Disordered" evidence="6">
    <location>
        <begin position="564"/>
        <end position="609"/>
    </location>
</feature>
<feature type="region of interest" description="Disordered" evidence="6">
    <location>
        <begin position="705"/>
        <end position="768"/>
    </location>
</feature>
<feature type="coiled-coil region" evidence="4">
    <location>
        <begin position="611"/>
        <end position="701"/>
    </location>
</feature>
<feature type="compositionally biased region" description="Polar residues" evidence="6">
    <location>
        <begin position="165"/>
        <end position="185"/>
    </location>
</feature>
<feature type="compositionally biased region" description="Basic and acidic residues" evidence="6">
    <location>
        <begin position="340"/>
        <end position="349"/>
    </location>
</feature>
<feature type="compositionally biased region" description="Polar residues" evidence="6">
    <location>
        <begin position="350"/>
        <end position="362"/>
    </location>
</feature>
<feature type="compositionally biased region" description="Basic and acidic residues" evidence="6">
    <location>
        <begin position="587"/>
        <end position="596"/>
    </location>
</feature>
<feature type="compositionally biased region" description="Polar residues" evidence="6">
    <location>
        <begin position="710"/>
        <end position="734"/>
    </location>
</feature>
<feature type="compositionally biased region" description="Basic and acidic residues" evidence="6">
    <location>
        <begin position="759"/>
        <end position="768"/>
    </location>
</feature>
<feature type="modified residue" description="Phosphoserine" evidence="2">
    <location>
        <position position="87"/>
    </location>
</feature>
<feature type="modified residue" description="Phosphoserine" evidence="2">
    <location>
        <position position="93"/>
    </location>
</feature>
<feature type="modified residue" description="Phosphoserine" evidence="2">
    <location>
        <position position="97"/>
    </location>
</feature>
<feature type="modified residue" description="Phosphoserine" evidence="2">
    <location>
        <position position="103"/>
    </location>
</feature>
<feature type="modified residue" description="Phosphoserine" evidence="9">
    <location>
        <position position="153"/>
    </location>
</feature>
<feature type="modified residue" description="Phosphoserine" evidence="9">
    <location>
        <position position="329"/>
    </location>
</feature>
<feature type="modified residue" description="Phosphoserine" evidence="8">
    <location>
        <position position="343"/>
    </location>
</feature>
<feature type="modified residue" description="Phosphotyrosine" evidence="9">
    <location>
        <position position="557"/>
    </location>
</feature>
<feature type="modified residue" description="Phosphoserine" evidence="9">
    <location>
        <position position="747"/>
    </location>
</feature>
<feature type="splice variant" id="VSP_026860" description="In isoform 2." evidence="7">
    <original>KGKKNSLAELKGSMSRAAGRKITRIISFSKKKALSEDLQTFSSEDEVPCCGYLNVLVNQGWKERWCRLRCNTLYFHKDRTDLHTHV</original>
    <variation>RSYHELPLVHAGECQRWEGLCYRSTVTEQITGTRVRPLGLSYLVITGRLQGLLGRPEVGRSGTVASFPIPVSPLLWCQAKGRRTAWLSLRAP</variation>
    <location>
        <begin position="373"/>
        <end position="458"/>
    </location>
</feature>
<feature type="splice variant" id="VSP_026861" description="In isoform 2." evidence="7">
    <location>
        <begin position="459"/>
        <end position="768"/>
    </location>
</feature>
<gene>
    <name type="primary">Afap1l1</name>
</gene>
<comment type="function">
    <text evidence="1">May be involved in podosome and invadosome formation.</text>
</comment>
<comment type="subunit">
    <text evidence="1">Interacts with CTTN.</text>
</comment>
<comment type="subcellular location">
    <subcellularLocation>
        <location evidence="3">Cytoplasm</location>
    </subcellularLocation>
    <subcellularLocation>
        <location evidence="3">Cell projection</location>
        <location evidence="3">Podosome</location>
    </subcellularLocation>
    <subcellularLocation>
        <location evidence="3">Cell projection</location>
        <location evidence="3">Invadopodium</location>
    </subcellularLocation>
    <subcellularLocation>
        <location evidence="3">Cytoplasm</location>
        <location evidence="3">Cytoskeleton</location>
        <location evidence="3">Stress fiber</location>
    </subcellularLocation>
</comment>
<comment type="alternative products">
    <event type="alternative splicing"/>
    <isoform>
        <id>Q8BZI0-1</id>
        <name>1</name>
        <sequence type="displayed"/>
    </isoform>
    <isoform>
        <id>Q8BZI0-2</id>
        <name>2</name>
        <sequence type="described" ref="VSP_026860 VSP_026861"/>
    </isoform>
</comment>
<dbReference type="EMBL" id="AK035227">
    <property type="protein sequence ID" value="BAC28988.1"/>
    <property type="molecule type" value="mRNA"/>
</dbReference>
<dbReference type="EMBL" id="AK053714">
    <property type="protein sequence ID" value="BAC35486.1"/>
    <property type="molecule type" value="mRNA"/>
</dbReference>
<dbReference type="CCDS" id="CCDS50303.1">
    <molecule id="Q8BZI0-1"/>
</dbReference>
<dbReference type="RefSeq" id="NP_849259.2">
    <molecule id="Q8BZI0-1"/>
    <property type="nucleotide sequence ID" value="NM_178928.4"/>
</dbReference>
<dbReference type="FunCoup" id="Q8BZI0">
    <property type="interactions" value="504"/>
</dbReference>
<dbReference type="STRING" id="10090.ENSMUSP00000113286"/>
<dbReference type="iPTMnet" id="Q8BZI0"/>
<dbReference type="PhosphoSitePlus" id="Q8BZI0"/>
<dbReference type="SwissPalm" id="Q8BZI0"/>
<dbReference type="jPOST" id="Q8BZI0"/>
<dbReference type="PaxDb" id="10090-ENSMUSP00000113286"/>
<dbReference type="ProteomicsDB" id="285556">
    <molecule id="Q8BZI0-1"/>
</dbReference>
<dbReference type="ProteomicsDB" id="285557">
    <molecule id="Q8BZI0-2"/>
</dbReference>
<dbReference type="Antibodypedia" id="2023">
    <property type="antibodies" value="74 antibodies from 21 providers"/>
</dbReference>
<dbReference type="DNASU" id="106877"/>
<dbReference type="Ensembl" id="ENSMUST00000120472.2">
    <molecule id="Q8BZI0-1"/>
    <property type="protein sequence ID" value="ENSMUSP00000113286.2"/>
    <property type="gene ID" value="ENSMUSG00000033032.16"/>
</dbReference>
<dbReference type="GeneID" id="106877"/>
<dbReference type="KEGG" id="mmu:106877"/>
<dbReference type="UCSC" id="uc008fcq.1">
    <molecule id="Q8BZI0-1"/>
    <property type="organism name" value="mouse"/>
</dbReference>
<dbReference type="AGR" id="MGI:2147199"/>
<dbReference type="CTD" id="134265"/>
<dbReference type="MGI" id="MGI:2147199">
    <property type="gene designation" value="Afap1l1"/>
</dbReference>
<dbReference type="VEuPathDB" id="HostDB:ENSMUSG00000033032"/>
<dbReference type="eggNOG" id="ENOG502R3HG">
    <property type="taxonomic scope" value="Eukaryota"/>
</dbReference>
<dbReference type="GeneTree" id="ENSGT00950000183067"/>
<dbReference type="HOGENOM" id="CLU_014418_1_0_1"/>
<dbReference type="InParanoid" id="Q8BZI0"/>
<dbReference type="OMA" id="HSCEVVP"/>
<dbReference type="OrthoDB" id="9937741at2759"/>
<dbReference type="PhylomeDB" id="Q8BZI0"/>
<dbReference type="TreeFam" id="TF332622"/>
<dbReference type="BioGRID-ORCS" id="106877">
    <property type="hits" value="3 hits in 76 CRISPR screens"/>
</dbReference>
<dbReference type="ChiTaRS" id="Afap1l1">
    <property type="organism name" value="mouse"/>
</dbReference>
<dbReference type="PRO" id="PR:Q8BZI0"/>
<dbReference type="Proteomes" id="UP000000589">
    <property type="component" value="Chromosome 18"/>
</dbReference>
<dbReference type="RNAct" id="Q8BZI0">
    <property type="molecule type" value="protein"/>
</dbReference>
<dbReference type="Bgee" id="ENSMUSG00000033032">
    <property type="expression patterns" value="Expressed in interventricular septum and 213 other cell types or tissues"/>
</dbReference>
<dbReference type="ExpressionAtlas" id="Q8BZI0">
    <property type="expression patterns" value="baseline and differential"/>
</dbReference>
<dbReference type="GO" id="GO:0070161">
    <property type="term" value="C:anchoring junction"/>
    <property type="evidence" value="ECO:0007669"/>
    <property type="project" value="UniProtKB-KW"/>
</dbReference>
<dbReference type="GO" id="GO:0042995">
    <property type="term" value="C:cell projection"/>
    <property type="evidence" value="ECO:0007669"/>
    <property type="project" value="UniProtKB-SubCell"/>
</dbReference>
<dbReference type="GO" id="GO:0005737">
    <property type="term" value="C:cytoplasm"/>
    <property type="evidence" value="ECO:0007669"/>
    <property type="project" value="UniProtKB-SubCell"/>
</dbReference>
<dbReference type="GO" id="GO:0002102">
    <property type="term" value="C:podosome"/>
    <property type="evidence" value="ECO:0007669"/>
    <property type="project" value="UniProtKB-SubCell"/>
</dbReference>
<dbReference type="GO" id="GO:0001725">
    <property type="term" value="C:stress fiber"/>
    <property type="evidence" value="ECO:0007669"/>
    <property type="project" value="UniProtKB-SubCell"/>
</dbReference>
<dbReference type="CDD" id="cd13306">
    <property type="entry name" value="PH1_AFAP"/>
    <property type="match status" value="1"/>
</dbReference>
<dbReference type="CDD" id="cd13307">
    <property type="entry name" value="PH2_AFAP"/>
    <property type="match status" value="1"/>
</dbReference>
<dbReference type="FunFam" id="2.30.29.30:FF:000189">
    <property type="entry name" value="Actin filament associated protein 1-like 1"/>
    <property type="match status" value="1"/>
</dbReference>
<dbReference type="FunFam" id="2.30.29.30:FF:000020">
    <property type="entry name" value="Actin filament-associated protein 1-like 2 isoform 1"/>
    <property type="match status" value="1"/>
</dbReference>
<dbReference type="Gene3D" id="2.30.29.30">
    <property type="entry name" value="Pleckstrin-homology domain (PH domain)/Phosphotyrosine-binding domain (PTB)"/>
    <property type="match status" value="2"/>
</dbReference>
<dbReference type="InterPro" id="IPR030113">
    <property type="entry name" value="AFAP"/>
</dbReference>
<dbReference type="InterPro" id="IPR011993">
    <property type="entry name" value="PH-like_dom_sf"/>
</dbReference>
<dbReference type="InterPro" id="IPR001849">
    <property type="entry name" value="PH_domain"/>
</dbReference>
<dbReference type="PANTHER" id="PTHR14338">
    <property type="entry name" value="ACTIN FILAMENT-ASSOCIATED PROTEIN 1 FAMILY MEMBER"/>
    <property type="match status" value="1"/>
</dbReference>
<dbReference type="PANTHER" id="PTHR14338:SF1">
    <property type="entry name" value="ACTIN FILAMENT-ASSOCIATED PROTEIN 1-LIKE 1"/>
    <property type="match status" value="1"/>
</dbReference>
<dbReference type="Pfam" id="PF00169">
    <property type="entry name" value="PH"/>
    <property type="match status" value="2"/>
</dbReference>
<dbReference type="SMART" id="SM00233">
    <property type="entry name" value="PH"/>
    <property type="match status" value="2"/>
</dbReference>
<dbReference type="SUPFAM" id="SSF50729">
    <property type="entry name" value="PH domain-like"/>
    <property type="match status" value="2"/>
</dbReference>
<dbReference type="PROSITE" id="PS50003">
    <property type="entry name" value="PH_DOMAIN"/>
    <property type="match status" value="2"/>
</dbReference>
<name>AF1L1_MOUSE</name>
<accession>Q8BZI0</accession>
<accession>Q8BKB8</accession>
<evidence type="ECO:0000250" key="1"/>
<evidence type="ECO:0000250" key="2">
    <source>
        <dbReference type="UniProtKB" id="D4AB98"/>
    </source>
</evidence>
<evidence type="ECO:0000250" key="3">
    <source>
        <dbReference type="UniProtKB" id="Q8TED9"/>
    </source>
</evidence>
<evidence type="ECO:0000255" key="4"/>
<evidence type="ECO:0000255" key="5">
    <source>
        <dbReference type="PROSITE-ProRule" id="PRU00145"/>
    </source>
</evidence>
<evidence type="ECO:0000256" key="6">
    <source>
        <dbReference type="SAM" id="MobiDB-lite"/>
    </source>
</evidence>
<evidence type="ECO:0000303" key="7">
    <source>
    </source>
</evidence>
<evidence type="ECO:0007744" key="8">
    <source>
    </source>
</evidence>
<evidence type="ECO:0007744" key="9">
    <source>
    </source>
</evidence>
<keyword id="KW-0025">Alternative splicing</keyword>
<keyword id="KW-0965">Cell junction</keyword>
<keyword id="KW-0966">Cell projection</keyword>
<keyword id="KW-0175">Coiled coil</keyword>
<keyword id="KW-0963">Cytoplasm</keyword>
<keyword id="KW-0206">Cytoskeleton</keyword>
<keyword id="KW-0597">Phosphoprotein</keyword>
<keyword id="KW-1185">Reference proteome</keyword>
<keyword id="KW-0677">Repeat</keyword>
<protein>
    <recommendedName>
        <fullName>Actin filament-associated protein 1-like 1</fullName>
        <shortName>AFAP1-like protein 1</shortName>
    </recommendedName>
</protein>
<reference key="1">
    <citation type="journal article" date="2005" name="Science">
        <title>The transcriptional landscape of the mammalian genome.</title>
        <authorList>
            <person name="Carninci P."/>
            <person name="Kasukawa T."/>
            <person name="Katayama S."/>
            <person name="Gough J."/>
            <person name="Frith M.C."/>
            <person name="Maeda N."/>
            <person name="Oyama R."/>
            <person name="Ravasi T."/>
            <person name="Lenhard B."/>
            <person name="Wells C."/>
            <person name="Kodzius R."/>
            <person name="Shimokawa K."/>
            <person name="Bajic V.B."/>
            <person name="Brenner S.E."/>
            <person name="Batalov S."/>
            <person name="Forrest A.R."/>
            <person name="Zavolan M."/>
            <person name="Davis M.J."/>
            <person name="Wilming L.G."/>
            <person name="Aidinis V."/>
            <person name="Allen J.E."/>
            <person name="Ambesi-Impiombato A."/>
            <person name="Apweiler R."/>
            <person name="Aturaliya R.N."/>
            <person name="Bailey T.L."/>
            <person name="Bansal M."/>
            <person name="Baxter L."/>
            <person name="Beisel K.W."/>
            <person name="Bersano T."/>
            <person name="Bono H."/>
            <person name="Chalk A.M."/>
            <person name="Chiu K.P."/>
            <person name="Choudhary V."/>
            <person name="Christoffels A."/>
            <person name="Clutterbuck D.R."/>
            <person name="Crowe M.L."/>
            <person name="Dalla E."/>
            <person name="Dalrymple B.P."/>
            <person name="de Bono B."/>
            <person name="Della Gatta G."/>
            <person name="di Bernardo D."/>
            <person name="Down T."/>
            <person name="Engstrom P."/>
            <person name="Fagiolini M."/>
            <person name="Faulkner G."/>
            <person name="Fletcher C.F."/>
            <person name="Fukushima T."/>
            <person name="Furuno M."/>
            <person name="Futaki S."/>
            <person name="Gariboldi M."/>
            <person name="Georgii-Hemming P."/>
            <person name="Gingeras T.R."/>
            <person name="Gojobori T."/>
            <person name="Green R.E."/>
            <person name="Gustincich S."/>
            <person name="Harbers M."/>
            <person name="Hayashi Y."/>
            <person name="Hensch T.K."/>
            <person name="Hirokawa N."/>
            <person name="Hill D."/>
            <person name="Huminiecki L."/>
            <person name="Iacono M."/>
            <person name="Ikeo K."/>
            <person name="Iwama A."/>
            <person name="Ishikawa T."/>
            <person name="Jakt M."/>
            <person name="Kanapin A."/>
            <person name="Katoh M."/>
            <person name="Kawasawa Y."/>
            <person name="Kelso J."/>
            <person name="Kitamura H."/>
            <person name="Kitano H."/>
            <person name="Kollias G."/>
            <person name="Krishnan S.P."/>
            <person name="Kruger A."/>
            <person name="Kummerfeld S.K."/>
            <person name="Kurochkin I.V."/>
            <person name="Lareau L.F."/>
            <person name="Lazarevic D."/>
            <person name="Lipovich L."/>
            <person name="Liu J."/>
            <person name="Liuni S."/>
            <person name="McWilliam S."/>
            <person name="Madan Babu M."/>
            <person name="Madera M."/>
            <person name="Marchionni L."/>
            <person name="Matsuda H."/>
            <person name="Matsuzawa S."/>
            <person name="Miki H."/>
            <person name="Mignone F."/>
            <person name="Miyake S."/>
            <person name="Morris K."/>
            <person name="Mottagui-Tabar S."/>
            <person name="Mulder N."/>
            <person name="Nakano N."/>
            <person name="Nakauchi H."/>
            <person name="Ng P."/>
            <person name="Nilsson R."/>
            <person name="Nishiguchi S."/>
            <person name="Nishikawa S."/>
            <person name="Nori F."/>
            <person name="Ohara O."/>
            <person name="Okazaki Y."/>
            <person name="Orlando V."/>
            <person name="Pang K.C."/>
            <person name="Pavan W.J."/>
            <person name="Pavesi G."/>
            <person name="Pesole G."/>
            <person name="Petrovsky N."/>
            <person name="Piazza S."/>
            <person name="Reed J."/>
            <person name="Reid J.F."/>
            <person name="Ring B.Z."/>
            <person name="Ringwald M."/>
            <person name="Rost B."/>
            <person name="Ruan Y."/>
            <person name="Salzberg S.L."/>
            <person name="Sandelin A."/>
            <person name="Schneider C."/>
            <person name="Schoenbach C."/>
            <person name="Sekiguchi K."/>
            <person name="Semple C.A."/>
            <person name="Seno S."/>
            <person name="Sessa L."/>
            <person name="Sheng Y."/>
            <person name="Shibata Y."/>
            <person name="Shimada H."/>
            <person name="Shimada K."/>
            <person name="Silva D."/>
            <person name="Sinclair B."/>
            <person name="Sperling S."/>
            <person name="Stupka E."/>
            <person name="Sugiura K."/>
            <person name="Sultana R."/>
            <person name="Takenaka Y."/>
            <person name="Taki K."/>
            <person name="Tammoja K."/>
            <person name="Tan S.L."/>
            <person name="Tang S."/>
            <person name="Taylor M.S."/>
            <person name="Tegner J."/>
            <person name="Teichmann S.A."/>
            <person name="Ueda H.R."/>
            <person name="van Nimwegen E."/>
            <person name="Verardo R."/>
            <person name="Wei C.L."/>
            <person name="Yagi K."/>
            <person name="Yamanishi H."/>
            <person name="Zabarovsky E."/>
            <person name="Zhu S."/>
            <person name="Zimmer A."/>
            <person name="Hide W."/>
            <person name="Bult C."/>
            <person name="Grimmond S.M."/>
            <person name="Teasdale R.D."/>
            <person name="Liu E.T."/>
            <person name="Brusic V."/>
            <person name="Quackenbush J."/>
            <person name="Wahlestedt C."/>
            <person name="Mattick J.S."/>
            <person name="Hume D.A."/>
            <person name="Kai C."/>
            <person name="Sasaki D."/>
            <person name="Tomaru Y."/>
            <person name="Fukuda S."/>
            <person name="Kanamori-Katayama M."/>
            <person name="Suzuki M."/>
            <person name="Aoki J."/>
            <person name="Arakawa T."/>
            <person name="Iida J."/>
            <person name="Imamura K."/>
            <person name="Itoh M."/>
            <person name="Kato T."/>
            <person name="Kawaji H."/>
            <person name="Kawagashira N."/>
            <person name="Kawashima T."/>
            <person name="Kojima M."/>
            <person name="Kondo S."/>
            <person name="Konno H."/>
            <person name="Nakano K."/>
            <person name="Ninomiya N."/>
            <person name="Nishio T."/>
            <person name="Okada M."/>
            <person name="Plessy C."/>
            <person name="Shibata K."/>
            <person name="Shiraki T."/>
            <person name="Suzuki S."/>
            <person name="Tagami M."/>
            <person name="Waki K."/>
            <person name="Watahiki A."/>
            <person name="Okamura-Oho Y."/>
            <person name="Suzuki H."/>
            <person name="Kawai J."/>
            <person name="Hayashizaki Y."/>
        </authorList>
    </citation>
    <scope>NUCLEOTIDE SEQUENCE [LARGE SCALE MRNA] (ISOFORMS 1 AND 2)</scope>
    <source>
        <strain>C57BL/6J</strain>
        <tissue>Urinary bladder</tissue>
    </source>
</reference>
<reference key="2">
    <citation type="journal article" date="2004" name="Mol. Cell. Proteomics">
        <title>Phosphoproteomic analysis of the developing mouse brain.</title>
        <authorList>
            <person name="Ballif B.A."/>
            <person name="Villen J."/>
            <person name="Beausoleil S.A."/>
            <person name="Schwartz D."/>
            <person name="Gygi S.P."/>
        </authorList>
    </citation>
    <scope>PHOSPHORYLATION [LARGE SCALE ANALYSIS] AT SER-343</scope>
    <scope>IDENTIFICATION BY MASS SPECTROMETRY [LARGE SCALE ANALYSIS]</scope>
    <source>
        <tissue>Embryonic brain</tissue>
    </source>
</reference>
<reference key="3">
    <citation type="journal article" date="2010" name="Cell">
        <title>A tissue-specific atlas of mouse protein phosphorylation and expression.</title>
        <authorList>
            <person name="Huttlin E.L."/>
            <person name="Jedrychowski M.P."/>
            <person name="Elias J.E."/>
            <person name="Goswami T."/>
            <person name="Rad R."/>
            <person name="Beausoleil S.A."/>
            <person name="Villen J."/>
            <person name="Haas W."/>
            <person name="Sowa M.E."/>
            <person name="Gygi S.P."/>
        </authorList>
    </citation>
    <scope>PHOSPHORYLATION [LARGE SCALE ANALYSIS] AT SER-153; SER-329; TYR-557 AND SER-747</scope>
    <scope>IDENTIFICATION BY MASS SPECTROMETRY [LARGE SCALE ANALYSIS]</scope>
    <source>
        <tissue>Brown adipose tissue</tissue>
        <tissue>Heart</tissue>
        <tissue>Kidney</tissue>
        <tissue>Lung</tissue>
    </source>
</reference>
<proteinExistence type="evidence at protein level"/>
<sequence length="768" mass="86638">MDRSRVLEQLIPELTGLLSLLDHEYLSDSTLEKKMAVASLLQSLQPLPAKEVSFLYVNTADLHSGPSFVESLFEEFDCDLGDLRDMSDDGEPSKGASPEPTKSPSLRSAAADVPPPLPNKPPPEDYYEEALPLGPGKSPEYISSHNGCSPAQSIVDGYYEDADNSYPTTRMNGELKNSYNDSDAMSSSYESYDEEEEEEKGRQPKHQWPSEEASMHLVRDCRICAFLLRKKRFGQWAKQLTVIKEEQLLCYKSSKDRQPHLRLALDVCTVIYVPKDSRHKRHELRFSQGATEVLVLALQSREQAEEWLKVIREVSRPIVGAEGLEVPRSPVILCKADQDKRLSQEKQNSDSDSLGMNDSGSTLGRREACEHGKGKKNSLAELKGSMSRAAGRKITRIISFSKKKALSEDLQTFSSEDEVPCCGYLNVLVNQGWKERWCRLRCNTLYFHKDRTDLHTHVNSIALRGCEVAPGFGPRHPFAFRILRNRQEVAILEASCSEDMGRWLGLLLVEMGSKVTPEALHYDYVDVETLTSIVSAGRNSFLYAQSCQDQWPEPRIYDEVPYEKVQDEEPQRPTGAQVKRHASSCSEKSHRADPQVKVKRHASSANQYKYGKNRAEEDARRYLVEKERLEKEKETIRTELTALRQEKKELKEAIRNNPGAKSKALEEAVATLEAQCRAKEEQRIDLELKLVAVKERLQQSLAGGPALGLSVSNKNKSQDTTNKPQSNAPEQSLPVNCVSELRKRSPSIVTSNQGRVLQKAKEWEMKKT</sequence>
<organism>
    <name type="scientific">Mus musculus</name>
    <name type="common">Mouse</name>
    <dbReference type="NCBI Taxonomy" id="10090"/>
    <lineage>
        <taxon>Eukaryota</taxon>
        <taxon>Metazoa</taxon>
        <taxon>Chordata</taxon>
        <taxon>Craniata</taxon>
        <taxon>Vertebrata</taxon>
        <taxon>Euteleostomi</taxon>
        <taxon>Mammalia</taxon>
        <taxon>Eutheria</taxon>
        <taxon>Euarchontoglires</taxon>
        <taxon>Glires</taxon>
        <taxon>Rodentia</taxon>
        <taxon>Myomorpha</taxon>
        <taxon>Muroidea</taxon>
        <taxon>Muridae</taxon>
        <taxon>Murinae</taxon>
        <taxon>Mus</taxon>
        <taxon>Mus</taxon>
    </lineage>
</organism>